<comment type="subcellular location">
    <subcellularLocation>
        <location evidence="3">Secreted</location>
        <location evidence="3">Cell wall</location>
    </subcellularLocation>
</comment>
<comment type="tissue specificity">
    <text>Inflorescence.</text>
</comment>
<comment type="induction">
    <text>By gibberellins.</text>
</comment>
<evidence type="ECO:0000255" key="1"/>
<evidence type="ECO:0000256" key="2">
    <source>
        <dbReference type="SAM" id="MobiDB-lite"/>
    </source>
</evidence>
<evidence type="ECO:0000305" key="3"/>
<sequence length="140" mass="14260">MASSLITSAVIVVVLSLVLGSVEQVSGLRHVPKSPKTTDVKHPDFLVTIEPKPTILIPGVGRFLLPPKCKKPFYPYNPVTGAPLTGGGIPSYNGGQGAGPHTQLPGGDDTLVPNPGFEAPTPTIGAGTGSNGQVPPVPLP</sequence>
<accession>P47925</accession>
<accession>Q9SKT2</accession>
<protein>
    <recommendedName>
        <fullName>Putative cell wall protein</fullName>
    </recommendedName>
</protein>
<dbReference type="EMBL" id="X74360">
    <property type="protein sequence ID" value="CAA52404.1"/>
    <property type="molecule type" value="mRNA"/>
</dbReference>
<dbReference type="EMBL" id="AC006234">
    <property type="protein sequence ID" value="AAD20908.1"/>
    <property type="molecule type" value="Genomic_DNA"/>
</dbReference>
<dbReference type="EMBL" id="CP002685">
    <property type="protein sequence ID" value="AEC07089.1"/>
    <property type="molecule type" value="Genomic_DNA"/>
</dbReference>
<dbReference type="PIR" id="D84594">
    <property type="entry name" value="D84594"/>
</dbReference>
<dbReference type="PIR" id="S43789">
    <property type="entry name" value="S43789"/>
</dbReference>
<dbReference type="RefSeq" id="NP_565490.1">
    <property type="nucleotide sequence ID" value="NM_127656.5"/>
</dbReference>
<dbReference type="FunCoup" id="P47925">
    <property type="interactions" value="6"/>
</dbReference>
<dbReference type="STRING" id="3702.P47925"/>
<dbReference type="GlyGen" id="P47925">
    <property type="glycosylation" value="1 site"/>
</dbReference>
<dbReference type="PaxDb" id="3702-AT2G20870.1"/>
<dbReference type="ProteomicsDB" id="220508"/>
<dbReference type="EnsemblPlants" id="AT2G20870.1">
    <property type="protein sequence ID" value="AT2G20870.1"/>
    <property type="gene ID" value="AT2G20870"/>
</dbReference>
<dbReference type="GeneID" id="816620"/>
<dbReference type="Gramene" id="AT2G20870.1">
    <property type="protein sequence ID" value="AT2G20870.1"/>
    <property type="gene ID" value="AT2G20870"/>
</dbReference>
<dbReference type="KEGG" id="ath:AT2G20870"/>
<dbReference type="Araport" id="AT2G20870"/>
<dbReference type="TAIR" id="AT2G20870"/>
<dbReference type="HOGENOM" id="CLU_2030932_0_0_1"/>
<dbReference type="InParanoid" id="P47925"/>
<dbReference type="OMA" id="KQPEWFI"/>
<dbReference type="OrthoDB" id="1931827at2759"/>
<dbReference type="PhylomeDB" id="P47925"/>
<dbReference type="PRO" id="PR:P47925"/>
<dbReference type="Proteomes" id="UP000006548">
    <property type="component" value="Chromosome 2"/>
</dbReference>
<dbReference type="ExpressionAtlas" id="P47925">
    <property type="expression patterns" value="baseline and differential"/>
</dbReference>
<dbReference type="GO" id="GO:0005576">
    <property type="term" value="C:extracellular region"/>
    <property type="evidence" value="ECO:0007669"/>
    <property type="project" value="UniProtKB-KW"/>
</dbReference>
<dbReference type="InterPro" id="IPR034565">
    <property type="entry name" value="Put_cell_wall"/>
</dbReference>
<dbReference type="PANTHER" id="PTHR36733">
    <property type="entry name" value="CELL WALL PROTEIN-RELATED"/>
    <property type="match status" value="1"/>
</dbReference>
<dbReference type="PANTHER" id="PTHR36733:SF1">
    <property type="entry name" value="CELL WALL PROTEIN-RELATED"/>
    <property type="match status" value="1"/>
</dbReference>
<keyword id="KW-0134">Cell wall</keyword>
<keyword id="KW-1185">Reference proteome</keyword>
<keyword id="KW-0964">Secreted</keyword>
<keyword id="KW-0732">Signal</keyword>
<name>CWPX_ARATH</name>
<reference key="1">
    <citation type="journal article" date="1994" name="Plant Mol. Biol.">
        <title>Cloning of two gibberellin-regulated cDNAs from Arabidopsis thaliana by subtractive hybridization: expression of the tonoplast water channel, gamma-TIP, is increased by GA3.</title>
        <authorList>
            <person name="Phillips A.L."/>
            <person name="Huttly A.K."/>
        </authorList>
    </citation>
    <scope>NUCLEOTIDE SEQUENCE [MRNA]</scope>
    <source>
        <strain>cv. Landsberg erecta</strain>
    </source>
</reference>
<reference key="2">
    <citation type="journal article" date="1999" name="Nature">
        <title>Sequence and analysis of chromosome 2 of the plant Arabidopsis thaliana.</title>
        <authorList>
            <person name="Lin X."/>
            <person name="Kaul S."/>
            <person name="Rounsley S.D."/>
            <person name="Shea T.P."/>
            <person name="Benito M.-I."/>
            <person name="Town C.D."/>
            <person name="Fujii C.Y."/>
            <person name="Mason T.M."/>
            <person name="Bowman C.L."/>
            <person name="Barnstead M.E."/>
            <person name="Feldblyum T.V."/>
            <person name="Buell C.R."/>
            <person name="Ketchum K.A."/>
            <person name="Lee J.J."/>
            <person name="Ronning C.M."/>
            <person name="Koo H.L."/>
            <person name="Moffat K.S."/>
            <person name="Cronin L.A."/>
            <person name="Shen M."/>
            <person name="Pai G."/>
            <person name="Van Aken S."/>
            <person name="Umayam L."/>
            <person name="Tallon L.J."/>
            <person name="Gill J.E."/>
            <person name="Adams M.D."/>
            <person name="Carrera A.J."/>
            <person name="Creasy T.H."/>
            <person name="Goodman H.M."/>
            <person name="Somerville C.R."/>
            <person name="Copenhaver G.P."/>
            <person name="Preuss D."/>
            <person name="Nierman W.C."/>
            <person name="White O."/>
            <person name="Eisen J.A."/>
            <person name="Salzberg S.L."/>
            <person name="Fraser C.M."/>
            <person name="Venter J.C."/>
        </authorList>
    </citation>
    <scope>NUCLEOTIDE SEQUENCE [LARGE SCALE GENOMIC DNA]</scope>
    <source>
        <strain>cv. Columbia</strain>
    </source>
</reference>
<reference key="3">
    <citation type="journal article" date="2017" name="Plant J.">
        <title>Araport11: a complete reannotation of the Arabidopsis thaliana reference genome.</title>
        <authorList>
            <person name="Cheng C.Y."/>
            <person name="Krishnakumar V."/>
            <person name="Chan A.P."/>
            <person name="Thibaud-Nissen F."/>
            <person name="Schobel S."/>
            <person name="Town C.D."/>
        </authorList>
    </citation>
    <scope>GENOME REANNOTATION</scope>
    <source>
        <strain>cv. Columbia</strain>
    </source>
</reference>
<feature type="signal peptide" evidence="1">
    <location>
        <begin position="1"/>
        <end position="21"/>
    </location>
</feature>
<feature type="chain" id="PRO_0000021053" description="Putative cell wall protein">
    <location>
        <begin position="22"/>
        <end position="140"/>
    </location>
</feature>
<feature type="region of interest" description="Disordered" evidence="2">
    <location>
        <begin position="85"/>
        <end position="140"/>
    </location>
</feature>
<feature type="compositionally biased region" description="Gly residues" evidence="2">
    <location>
        <begin position="85"/>
        <end position="98"/>
    </location>
</feature>
<feature type="sequence conflict" description="In Ref. 1; CAA52404." evidence="3" ref="1">
    <original>T</original>
    <variation>I</variation>
    <location>
        <position position="37"/>
    </location>
</feature>
<feature type="sequence conflict" description="In Ref. 1; CAA52404." evidence="3" ref="1">
    <original>A</original>
    <variation>E</variation>
    <location>
        <position position="119"/>
    </location>
</feature>
<gene>
    <name type="ordered locus">At2g20870</name>
    <name type="ORF">F5H14.16</name>
</gene>
<organism>
    <name type="scientific">Arabidopsis thaliana</name>
    <name type="common">Mouse-ear cress</name>
    <dbReference type="NCBI Taxonomy" id="3702"/>
    <lineage>
        <taxon>Eukaryota</taxon>
        <taxon>Viridiplantae</taxon>
        <taxon>Streptophyta</taxon>
        <taxon>Embryophyta</taxon>
        <taxon>Tracheophyta</taxon>
        <taxon>Spermatophyta</taxon>
        <taxon>Magnoliopsida</taxon>
        <taxon>eudicotyledons</taxon>
        <taxon>Gunneridae</taxon>
        <taxon>Pentapetalae</taxon>
        <taxon>rosids</taxon>
        <taxon>malvids</taxon>
        <taxon>Brassicales</taxon>
        <taxon>Brassicaceae</taxon>
        <taxon>Camelineae</taxon>
        <taxon>Arabidopsis</taxon>
    </lineage>
</organism>
<proteinExistence type="evidence at transcript level"/>